<name>PGLRB_ASPFU</name>
<evidence type="ECO:0000250" key="1"/>
<evidence type="ECO:0000255" key="2"/>
<evidence type="ECO:0000255" key="3">
    <source>
        <dbReference type="PROSITE-ProRule" id="PRU10052"/>
    </source>
</evidence>
<evidence type="ECO:0000305" key="4"/>
<proteinExistence type="inferred from homology"/>
<comment type="function">
    <text evidence="1">Involved in maceration and soft-rotting of plant tissue. Hydrolyzes the 1,4-alpha glycosidic bonds of de-esterified pectate in the smooth region of the plant cell wall (By similarity).</text>
</comment>
<comment type="catalytic activity">
    <reaction>
        <text>(1,4-alpha-D-galacturonosyl)n+m + H2O = (1,4-alpha-D-galacturonosyl)n + (1,4-alpha-D-galacturonosyl)m.</text>
        <dbReference type="EC" id="3.2.1.15"/>
    </reaction>
</comment>
<comment type="subcellular location">
    <subcellularLocation>
        <location evidence="1">Secreted</location>
    </subcellularLocation>
</comment>
<comment type="similarity">
    <text evidence="4">Belongs to the glycosyl hydrolase 28 family.</text>
</comment>
<protein>
    <recommendedName>
        <fullName>Probable endopolygalacturonase B</fullName>
        <ecNumber>3.2.1.15</ecNumber>
    </recommendedName>
    <alternativeName>
        <fullName>Pectinase B</fullName>
    </alternativeName>
    <alternativeName>
        <fullName>Polygalacturonase B</fullName>
    </alternativeName>
</protein>
<reference key="1">
    <citation type="journal article" date="2005" name="Nature">
        <title>Genomic sequence of the pathogenic and allergenic filamentous fungus Aspergillus fumigatus.</title>
        <authorList>
            <person name="Nierman W.C."/>
            <person name="Pain A."/>
            <person name="Anderson M.J."/>
            <person name="Wortman J.R."/>
            <person name="Kim H.S."/>
            <person name="Arroyo J."/>
            <person name="Berriman M."/>
            <person name="Abe K."/>
            <person name="Archer D.B."/>
            <person name="Bermejo C."/>
            <person name="Bennett J.W."/>
            <person name="Bowyer P."/>
            <person name="Chen D."/>
            <person name="Collins M."/>
            <person name="Coulsen R."/>
            <person name="Davies R."/>
            <person name="Dyer P.S."/>
            <person name="Farman M.L."/>
            <person name="Fedorova N."/>
            <person name="Fedorova N.D."/>
            <person name="Feldblyum T.V."/>
            <person name="Fischer R."/>
            <person name="Fosker N."/>
            <person name="Fraser A."/>
            <person name="Garcia J.L."/>
            <person name="Garcia M.J."/>
            <person name="Goble A."/>
            <person name="Goldman G.H."/>
            <person name="Gomi K."/>
            <person name="Griffith-Jones S."/>
            <person name="Gwilliam R."/>
            <person name="Haas B.J."/>
            <person name="Haas H."/>
            <person name="Harris D.E."/>
            <person name="Horiuchi H."/>
            <person name="Huang J."/>
            <person name="Humphray S."/>
            <person name="Jimenez J."/>
            <person name="Keller N."/>
            <person name="Khouri H."/>
            <person name="Kitamoto K."/>
            <person name="Kobayashi T."/>
            <person name="Konzack S."/>
            <person name="Kulkarni R."/>
            <person name="Kumagai T."/>
            <person name="Lafton A."/>
            <person name="Latge J.-P."/>
            <person name="Li W."/>
            <person name="Lord A."/>
            <person name="Lu C."/>
            <person name="Majoros W.H."/>
            <person name="May G.S."/>
            <person name="Miller B.L."/>
            <person name="Mohamoud Y."/>
            <person name="Molina M."/>
            <person name="Monod M."/>
            <person name="Mouyna I."/>
            <person name="Mulligan S."/>
            <person name="Murphy L.D."/>
            <person name="O'Neil S."/>
            <person name="Paulsen I."/>
            <person name="Penalva M.A."/>
            <person name="Pertea M."/>
            <person name="Price C."/>
            <person name="Pritchard B.L."/>
            <person name="Quail M.A."/>
            <person name="Rabbinowitsch E."/>
            <person name="Rawlins N."/>
            <person name="Rajandream M.A."/>
            <person name="Reichard U."/>
            <person name="Renauld H."/>
            <person name="Robson G.D."/>
            <person name="Rodriguez de Cordoba S."/>
            <person name="Rodriguez-Pena J.M."/>
            <person name="Ronning C.M."/>
            <person name="Rutter S."/>
            <person name="Salzberg S.L."/>
            <person name="Sanchez M."/>
            <person name="Sanchez-Ferrero J.C."/>
            <person name="Saunders D."/>
            <person name="Seeger K."/>
            <person name="Squares R."/>
            <person name="Squares S."/>
            <person name="Takeuchi M."/>
            <person name="Tekaia F."/>
            <person name="Turner G."/>
            <person name="Vazquez de Aldana C.R."/>
            <person name="Weidman J."/>
            <person name="White O."/>
            <person name="Woodward J.R."/>
            <person name="Yu J.-H."/>
            <person name="Fraser C.M."/>
            <person name="Galagan J.E."/>
            <person name="Asai K."/>
            <person name="Machida M."/>
            <person name="Hall N."/>
            <person name="Barrell B.G."/>
            <person name="Denning D.W."/>
        </authorList>
    </citation>
    <scope>NUCLEOTIDE SEQUENCE [LARGE SCALE GENOMIC DNA]</scope>
    <source>
        <strain>ATCC MYA-4609 / CBS 101355 / FGSC A1100 / Af293</strain>
    </source>
</reference>
<feature type="signal peptide" evidence="2">
    <location>
        <begin position="1"/>
        <end position="20"/>
    </location>
</feature>
<feature type="propeptide" id="PRO_0000393648" evidence="2">
    <location>
        <begin position="21"/>
        <end position="29"/>
    </location>
</feature>
<feature type="chain" id="PRO_0000393649" description="Probable endopolygalacturonase B">
    <location>
        <begin position="30"/>
        <end position="364"/>
    </location>
</feature>
<feature type="repeat" description="PbH1 1">
    <location>
        <begin position="159"/>
        <end position="188"/>
    </location>
</feature>
<feature type="repeat" description="PbH1 2">
    <location>
        <begin position="189"/>
        <end position="210"/>
    </location>
</feature>
<feature type="repeat" description="PbH1 3">
    <location>
        <begin position="211"/>
        <end position="231"/>
    </location>
</feature>
<feature type="repeat" description="PbH1 4">
    <location>
        <begin position="240"/>
        <end position="261"/>
    </location>
</feature>
<feature type="repeat" description="PbH1 5">
    <location>
        <begin position="269"/>
        <end position="291"/>
    </location>
</feature>
<feature type="repeat" description="PbH1 6">
    <location>
        <begin position="303"/>
        <end position="324"/>
    </location>
</feature>
<feature type="active site" description="Proton donor" evidence="3">
    <location>
        <position position="203"/>
    </location>
</feature>
<feature type="active site" evidence="3">
    <location>
        <position position="225"/>
    </location>
</feature>
<feature type="glycosylation site" description="N-linked (GlcNAc...) asparagine" evidence="2">
    <location>
        <position position="138"/>
    </location>
</feature>
<feature type="glycosylation site" description="N-linked (GlcNAc...) asparagine" evidence="2">
    <location>
        <position position="141"/>
    </location>
</feature>
<feature type="glycosylation site" description="N-linked (GlcNAc...) asparagine" evidence="2">
    <location>
        <position position="338"/>
    </location>
</feature>
<feature type="disulfide bond" evidence="1">
    <location>
        <begin position="32"/>
        <end position="47"/>
    </location>
</feature>
<feature type="disulfide bond" evidence="1">
    <location>
        <begin position="205"/>
        <end position="221"/>
    </location>
</feature>
<feature type="disulfide bond" evidence="1">
    <location>
        <begin position="331"/>
        <end position="336"/>
    </location>
</feature>
<feature type="disulfide bond" evidence="1">
    <location>
        <begin position="355"/>
        <end position="364"/>
    </location>
</feature>
<gene>
    <name type="primary">pgaB</name>
    <name type="synonym">pecB</name>
    <name type="ORF">AFUA_8G01970</name>
</gene>
<sequence length="364" mass="37691">MHFFQSSLVAATMGAALVAAAPAADLETRGSCTFTSTSALKSGKASCSTITLQNIAVPAGETLDLTGLKTGTTVVFDGTTTFGYKEWEGPLISASGTSITIKQNPGAKIDCDGARWWDGKGGNGGKKKPKFFSAHKLNKSNITGLKVYNTPVHGFSIQSDHLTIKDVLLDNSAGTKLGHNTDAFDVGSSTYITIDGATVYNQDDCLAVNSGEHITFTNGYCNGGHGLSIGSVGGRSNNVVNDVTISNSQVINSQNGARIKTVYGATGSVTGVKFQDISLKGITKYGIVVQQDYENGKPTGKPTNGVKVSDITFEKVTGTVTSSATDIYILCGSGSCTNWTWSGNSVTGGKKSSSCKNVPAGASC</sequence>
<accession>Q4WBE1</accession>
<dbReference type="EC" id="3.2.1.15"/>
<dbReference type="EMBL" id="AAHF01000014">
    <property type="protein sequence ID" value="EAL84971.1"/>
    <property type="molecule type" value="Genomic_DNA"/>
</dbReference>
<dbReference type="RefSeq" id="XP_747009.1">
    <property type="nucleotide sequence ID" value="XM_741916.1"/>
</dbReference>
<dbReference type="SMR" id="Q4WBE1"/>
<dbReference type="FunCoup" id="Q4WBE1">
    <property type="interactions" value="127"/>
</dbReference>
<dbReference type="STRING" id="330879.Q4WBE1"/>
<dbReference type="GlyCosmos" id="Q4WBE1">
    <property type="glycosylation" value="3 sites, No reported glycans"/>
</dbReference>
<dbReference type="EnsemblFungi" id="EAL84971">
    <property type="protein sequence ID" value="EAL84971"/>
    <property type="gene ID" value="AFUA_8G01970"/>
</dbReference>
<dbReference type="GeneID" id="3504571"/>
<dbReference type="KEGG" id="afm:AFUA_8G01970"/>
<dbReference type="VEuPathDB" id="FungiDB:Afu8g01970"/>
<dbReference type="eggNOG" id="ENOG502QTAW">
    <property type="taxonomic scope" value="Eukaryota"/>
</dbReference>
<dbReference type="HOGENOM" id="CLU_040116_0_0_1"/>
<dbReference type="InParanoid" id="Q4WBE1"/>
<dbReference type="OrthoDB" id="1546079at2759"/>
<dbReference type="Proteomes" id="UP000002530">
    <property type="component" value="Chromosome 8"/>
</dbReference>
<dbReference type="GO" id="GO:0005576">
    <property type="term" value="C:extracellular region"/>
    <property type="evidence" value="ECO:0000250"/>
    <property type="project" value="UniProtKB"/>
</dbReference>
<dbReference type="GO" id="GO:0004650">
    <property type="term" value="F:polygalacturonase activity"/>
    <property type="evidence" value="ECO:0000250"/>
    <property type="project" value="UniProtKB"/>
</dbReference>
<dbReference type="GO" id="GO:0071555">
    <property type="term" value="P:cell wall organization"/>
    <property type="evidence" value="ECO:0007669"/>
    <property type="project" value="UniProtKB-KW"/>
</dbReference>
<dbReference type="GO" id="GO:0045490">
    <property type="term" value="P:pectin catabolic process"/>
    <property type="evidence" value="ECO:0000250"/>
    <property type="project" value="UniProtKB"/>
</dbReference>
<dbReference type="FunFam" id="2.160.20.10:FF:000002">
    <property type="entry name" value="Endopolygalacturonase D"/>
    <property type="match status" value="1"/>
</dbReference>
<dbReference type="Gene3D" id="2.160.20.10">
    <property type="entry name" value="Single-stranded right-handed beta-helix, Pectin lyase-like"/>
    <property type="match status" value="1"/>
</dbReference>
<dbReference type="InterPro" id="IPR000743">
    <property type="entry name" value="Glyco_hydro_28"/>
</dbReference>
<dbReference type="InterPro" id="IPR050434">
    <property type="entry name" value="Glycosyl_hydrlase_28"/>
</dbReference>
<dbReference type="InterPro" id="IPR006626">
    <property type="entry name" value="PbH1"/>
</dbReference>
<dbReference type="InterPro" id="IPR012334">
    <property type="entry name" value="Pectin_lyas_fold"/>
</dbReference>
<dbReference type="InterPro" id="IPR011050">
    <property type="entry name" value="Pectin_lyase_fold/virulence"/>
</dbReference>
<dbReference type="PANTHER" id="PTHR31884:SF13">
    <property type="entry name" value="ENDOPOLYGALACTURONASE B"/>
    <property type="match status" value="1"/>
</dbReference>
<dbReference type="PANTHER" id="PTHR31884">
    <property type="entry name" value="POLYGALACTURONASE"/>
    <property type="match status" value="1"/>
</dbReference>
<dbReference type="Pfam" id="PF00295">
    <property type="entry name" value="Glyco_hydro_28"/>
    <property type="match status" value="1"/>
</dbReference>
<dbReference type="SMART" id="SM00710">
    <property type="entry name" value="PbH1"/>
    <property type="match status" value="6"/>
</dbReference>
<dbReference type="SUPFAM" id="SSF51126">
    <property type="entry name" value="Pectin lyase-like"/>
    <property type="match status" value="1"/>
</dbReference>
<dbReference type="PROSITE" id="PS00502">
    <property type="entry name" value="POLYGALACTURONASE"/>
    <property type="match status" value="1"/>
</dbReference>
<organism>
    <name type="scientific">Aspergillus fumigatus (strain ATCC MYA-4609 / CBS 101355 / FGSC A1100 / Af293)</name>
    <name type="common">Neosartorya fumigata</name>
    <dbReference type="NCBI Taxonomy" id="330879"/>
    <lineage>
        <taxon>Eukaryota</taxon>
        <taxon>Fungi</taxon>
        <taxon>Dikarya</taxon>
        <taxon>Ascomycota</taxon>
        <taxon>Pezizomycotina</taxon>
        <taxon>Eurotiomycetes</taxon>
        <taxon>Eurotiomycetidae</taxon>
        <taxon>Eurotiales</taxon>
        <taxon>Aspergillaceae</taxon>
        <taxon>Aspergillus</taxon>
        <taxon>Aspergillus subgen. Fumigati</taxon>
    </lineage>
</organism>
<keyword id="KW-0961">Cell wall biogenesis/degradation</keyword>
<keyword id="KW-1015">Disulfide bond</keyword>
<keyword id="KW-0325">Glycoprotein</keyword>
<keyword id="KW-0326">Glycosidase</keyword>
<keyword id="KW-0378">Hydrolase</keyword>
<keyword id="KW-1185">Reference proteome</keyword>
<keyword id="KW-0677">Repeat</keyword>
<keyword id="KW-0964">Secreted</keyword>
<keyword id="KW-0732">Signal</keyword>
<keyword id="KW-0865">Zymogen</keyword>